<feature type="chain" id="PRO_0000440953" description="StAR-related lipid transfer protein 3">
    <location>
        <begin position="1"/>
        <end position="445"/>
    </location>
</feature>
<feature type="topological domain" description="Cytoplasmic" evidence="1">
    <location>
        <begin position="1"/>
        <end position="51"/>
    </location>
</feature>
<feature type="transmembrane region" description="Helical" evidence="3 5">
    <location>
        <begin position="52"/>
        <end position="72"/>
    </location>
</feature>
<feature type="topological domain" description="Extracellular" evidence="7">
    <location>
        <begin position="73"/>
        <end position="94"/>
    </location>
</feature>
<feature type="transmembrane region" description="Helical" evidence="3 5">
    <location>
        <begin position="95"/>
        <end position="115"/>
    </location>
</feature>
<feature type="topological domain" description="Cytoplasmic" evidence="7">
    <location>
        <begin position="116"/>
        <end position="120"/>
    </location>
</feature>
<feature type="transmembrane region" description="Helical" evidence="3 5">
    <location>
        <begin position="121"/>
        <end position="141"/>
    </location>
</feature>
<feature type="topological domain" description="Extracellular" evidence="7">
    <location>
        <begin position="142"/>
        <end position="148"/>
    </location>
</feature>
<feature type="transmembrane region" description="Helical" evidence="3 5">
    <location>
        <begin position="149"/>
        <end position="169"/>
    </location>
</feature>
<feature type="topological domain" description="Cytoplasmic" evidence="1">
    <location>
        <begin position="170"/>
        <end position="445"/>
    </location>
</feature>
<feature type="domain" description="MENTAL" evidence="5">
    <location>
        <begin position="46"/>
        <end position="217"/>
    </location>
</feature>
<feature type="domain" description="START" evidence="4">
    <location>
        <begin position="248"/>
        <end position="443"/>
    </location>
</feature>
<feature type="short sequence motif" description="FFAT" evidence="1">
    <location>
        <begin position="206"/>
        <end position="212"/>
    </location>
</feature>
<feature type="short sequence motif" description="FFAT" evidence="1">
    <location>
        <begin position="207"/>
        <end position="212"/>
    </location>
</feature>
<feature type="modified residue" description="Phosphoserine" evidence="2">
    <location>
        <position position="209"/>
    </location>
</feature>
<feature type="modified residue" description="Phosphoserine" evidence="2">
    <location>
        <position position="217"/>
    </location>
</feature>
<feature type="modified residue" description="Phosphoserine" evidence="2">
    <location>
        <position position="221"/>
    </location>
</feature>
<feature type="sequence conflict" description="In Ref. 1; AFE76406/AFH30898/AFI36087 and 3; EHH24897." evidence="7" ref="1 3">
    <original>M</original>
    <variation>V</variation>
    <location>
        <position position="341"/>
    </location>
</feature>
<feature type="sequence conflict" description="In Ref. 1; AFE76406/AFH30898/AFI36087 and 3; EHH24897." evidence="7" ref="1 3">
    <original>L</original>
    <variation>P</variation>
    <location>
        <position position="374"/>
    </location>
</feature>
<evidence type="ECO:0000250" key="1">
    <source>
        <dbReference type="UniProtKB" id="Q14849"/>
    </source>
</evidence>
<evidence type="ECO:0000250" key="2">
    <source>
        <dbReference type="UniProtKB" id="Q61542"/>
    </source>
</evidence>
<evidence type="ECO:0000255" key="3"/>
<evidence type="ECO:0000255" key="4">
    <source>
        <dbReference type="PROSITE-ProRule" id="PRU00197"/>
    </source>
</evidence>
<evidence type="ECO:0000255" key="5">
    <source>
        <dbReference type="PROSITE-ProRule" id="PRU00770"/>
    </source>
</evidence>
<evidence type="ECO:0000269" key="6">
    <source>
    </source>
</evidence>
<evidence type="ECO:0000305" key="7"/>
<dbReference type="EMBL" id="JU332651">
    <property type="protein sequence ID" value="AFE76406.1"/>
    <property type="molecule type" value="mRNA"/>
</dbReference>
<dbReference type="EMBL" id="JU474094">
    <property type="protein sequence ID" value="AFH30898.1"/>
    <property type="molecule type" value="mRNA"/>
</dbReference>
<dbReference type="EMBL" id="JV046016">
    <property type="protein sequence ID" value="AFI36087.1"/>
    <property type="molecule type" value="mRNA"/>
</dbReference>
<dbReference type="EMBL" id="JSUE03016792">
    <property type="status" value="NOT_ANNOTATED_CDS"/>
    <property type="molecule type" value="Genomic_DNA"/>
</dbReference>
<dbReference type="EMBL" id="CM001268">
    <property type="protein sequence ID" value="EHH24897.1"/>
    <property type="molecule type" value="Genomic_DNA"/>
</dbReference>
<dbReference type="RefSeq" id="XP_001089498.1">
    <property type="nucleotide sequence ID" value="XM_001089498.4"/>
</dbReference>
<dbReference type="RefSeq" id="XP_014975020.1">
    <property type="nucleotide sequence ID" value="XM_015119534.2"/>
</dbReference>
<dbReference type="RefSeq" id="XP_028692280.1">
    <property type="nucleotide sequence ID" value="XM_028836447.1"/>
</dbReference>
<dbReference type="SMR" id="F7B909"/>
<dbReference type="FunCoup" id="F7B909">
    <property type="interactions" value="3113"/>
</dbReference>
<dbReference type="STRING" id="9544.ENSMMUP00000001794"/>
<dbReference type="PaxDb" id="9544-ENSMMUP00000034626"/>
<dbReference type="Ensembl" id="ENSMMUT00000001900.4">
    <property type="protein sequence ID" value="ENSMMUP00000001793.4"/>
    <property type="gene ID" value="ENSMMUG00000001343.4"/>
</dbReference>
<dbReference type="Ensembl" id="ENSMMUT00000001901.3">
    <property type="protein sequence ID" value="ENSMMUP00000001794.2"/>
    <property type="gene ID" value="ENSMMUG00000001343.4"/>
</dbReference>
<dbReference type="Ensembl" id="ENSMMUT00000086675.1">
    <property type="protein sequence ID" value="ENSMMUP00000073324.1"/>
    <property type="gene ID" value="ENSMMUG00000001343.4"/>
</dbReference>
<dbReference type="Ensembl" id="ENSMMUT00000088987.1">
    <property type="protein sequence ID" value="ENSMMUP00000071893.1"/>
    <property type="gene ID" value="ENSMMUG00000001343.4"/>
</dbReference>
<dbReference type="Ensembl" id="ENSMMUT00000096482.1">
    <property type="protein sequence ID" value="ENSMMUP00000062822.1"/>
    <property type="gene ID" value="ENSMMUG00000001343.4"/>
</dbReference>
<dbReference type="Ensembl" id="ENSMMUT00000105634.1">
    <property type="protein sequence ID" value="ENSMMUP00000073397.1"/>
    <property type="gene ID" value="ENSMMUG00000001343.4"/>
</dbReference>
<dbReference type="GeneID" id="697212"/>
<dbReference type="KEGG" id="mcc:697212"/>
<dbReference type="CTD" id="10948"/>
<dbReference type="VEuPathDB" id="HostDB:ENSMMUG00000001343"/>
<dbReference type="VGNC" id="VGNC:77941">
    <property type="gene designation" value="STARD3"/>
</dbReference>
<dbReference type="eggNOG" id="KOG3845">
    <property type="taxonomic scope" value="Eukaryota"/>
</dbReference>
<dbReference type="GeneTree" id="ENSGT00940000159051"/>
<dbReference type="HOGENOM" id="CLU_128806_0_0_1"/>
<dbReference type="InParanoid" id="F7B909"/>
<dbReference type="OMA" id="AYHMQYD"/>
<dbReference type="OrthoDB" id="5912992at2759"/>
<dbReference type="TreeFam" id="TF333228"/>
<dbReference type="Proteomes" id="UP000006718">
    <property type="component" value="Chromosome 16"/>
</dbReference>
<dbReference type="Proteomes" id="UP000013456">
    <property type="component" value="Chromosome 16"/>
</dbReference>
<dbReference type="Bgee" id="ENSMMUG00000001343">
    <property type="expression patterns" value="Expressed in hindlimb stylopod muscle and 21 other cell types or tissues"/>
</dbReference>
<dbReference type="ExpressionAtlas" id="F7B909">
    <property type="expression patterns" value="baseline"/>
</dbReference>
<dbReference type="GO" id="GO:0005789">
    <property type="term" value="C:endoplasmic reticulum membrane"/>
    <property type="evidence" value="ECO:0007669"/>
    <property type="project" value="Ensembl"/>
</dbReference>
<dbReference type="GO" id="GO:0140284">
    <property type="term" value="C:endoplasmic reticulum-endosome membrane contact site"/>
    <property type="evidence" value="ECO:0000250"/>
    <property type="project" value="UniProtKB"/>
</dbReference>
<dbReference type="GO" id="GO:0031902">
    <property type="term" value="C:late endosome membrane"/>
    <property type="evidence" value="ECO:0000318"/>
    <property type="project" value="GO_Central"/>
</dbReference>
<dbReference type="GO" id="GO:0005739">
    <property type="term" value="C:mitochondrion"/>
    <property type="evidence" value="ECO:0007669"/>
    <property type="project" value="Ensembl"/>
</dbReference>
<dbReference type="GO" id="GO:0005654">
    <property type="term" value="C:nucleoplasm"/>
    <property type="evidence" value="ECO:0007669"/>
    <property type="project" value="Ensembl"/>
</dbReference>
<dbReference type="GO" id="GO:0015485">
    <property type="term" value="F:cholesterol binding"/>
    <property type="evidence" value="ECO:0000318"/>
    <property type="project" value="GO_Central"/>
</dbReference>
<dbReference type="GO" id="GO:0120020">
    <property type="term" value="F:cholesterol transfer activity"/>
    <property type="evidence" value="ECO:0007669"/>
    <property type="project" value="InterPro"/>
</dbReference>
<dbReference type="GO" id="GO:0042803">
    <property type="term" value="F:protein homodimerization activity"/>
    <property type="evidence" value="ECO:0007669"/>
    <property type="project" value="Ensembl"/>
</dbReference>
<dbReference type="GO" id="GO:0030301">
    <property type="term" value="P:cholesterol transport"/>
    <property type="evidence" value="ECO:0000318"/>
    <property type="project" value="GO_Central"/>
</dbReference>
<dbReference type="GO" id="GO:0006701">
    <property type="term" value="P:progesterone biosynthetic process"/>
    <property type="evidence" value="ECO:0007669"/>
    <property type="project" value="Ensembl"/>
</dbReference>
<dbReference type="GO" id="GO:0099044">
    <property type="term" value="P:vesicle tethering to endoplasmic reticulum"/>
    <property type="evidence" value="ECO:0000318"/>
    <property type="project" value="GO_Central"/>
</dbReference>
<dbReference type="CDD" id="cd08906">
    <property type="entry name" value="START_STARD3-like"/>
    <property type="match status" value="1"/>
</dbReference>
<dbReference type="FunFam" id="3.30.530.20:FF:000014">
    <property type="entry name" value="stAR-related lipid transfer protein 3 isoform X2"/>
    <property type="match status" value="1"/>
</dbReference>
<dbReference type="Gene3D" id="3.30.530.20">
    <property type="match status" value="1"/>
</dbReference>
<dbReference type="InterPro" id="IPR019498">
    <property type="entry name" value="MENTAL"/>
</dbReference>
<dbReference type="InterPro" id="IPR000799">
    <property type="entry name" value="StAR-like"/>
</dbReference>
<dbReference type="InterPro" id="IPR051869">
    <property type="entry name" value="STARD3"/>
</dbReference>
<dbReference type="InterPro" id="IPR029867">
    <property type="entry name" value="STARD3_MLN64_C"/>
</dbReference>
<dbReference type="InterPro" id="IPR023393">
    <property type="entry name" value="START-like_dom_sf"/>
</dbReference>
<dbReference type="InterPro" id="IPR002913">
    <property type="entry name" value="START_lipid-bd_dom"/>
</dbReference>
<dbReference type="PANTHER" id="PTHR46121:SF2">
    <property type="entry name" value="STAR-RELATED LIPID TRANSFER PROTEIN 3"/>
    <property type="match status" value="1"/>
</dbReference>
<dbReference type="PANTHER" id="PTHR46121">
    <property type="entry name" value="STEROIDOGENIC ACUTE REGULATORY PROTEIN-LIKE"/>
    <property type="match status" value="1"/>
</dbReference>
<dbReference type="Pfam" id="PF10457">
    <property type="entry name" value="MENTAL"/>
    <property type="match status" value="1"/>
</dbReference>
<dbReference type="Pfam" id="PF01852">
    <property type="entry name" value="START"/>
    <property type="match status" value="1"/>
</dbReference>
<dbReference type="PRINTS" id="PR00978">
    <property type="entry name" value="STARPROTEIN"/>
</dbReference>
<dbReference type="SMART" id="SM00234">
    <property type="entry name" value="START"/>
    <property type="match status" value="1"/>
</dbReference>
<dbReference type="SUPFAM" id="SSF55961">
    <property type="entry name" value="Bet v1-like"/>
    <property type="match status" value="1"/>
</dbReference>
<dbReference type="PROSITE" id="PS51439">
    <property type="entry name" value="MENTAL"/>
    <property type="match status" value="1"/>
</dbReference>
<dbReference type="PROSITE" id="PS50848">
    <property type="entry name" value="START"/>
    <property type="match status" value="1"/>
</dbReference>
<gene>
    <name evidence="1" type="primary">STARD3</name>
    <name evidence="1" type="synonym">MLN64</name>
</gene>
<name>STAR3_MACMU</name>
<sequence>MSKLPGELARDLECSLPAVASLGSSLSHSQSLSSHLLPPPEKRRAISDVRRTFCLFVTFDLLFISLLWIIELNTNTGIRKNLEQEIIQYNFKTSFFDIFVLAFFRFSGLLLGYAVLRLQHWWVIAVTTLVSSAFLIVKVILSELLSKGAFGYLLPIVSFVLAWLETWFLDFKVLPQEAEEERWYLAAQAAVARGPLLFSGALSEGQFYSPPESFAGSDNESDEEVAGKKSFSAQEREYIRQGKEATAVVDQILAQEENWKFEKNNEYGDTVYTIEVPFHGKTFILKTFLPCPAELVYQEVILQPERMVLWNKTVTACQILQRVEDNTLISYDVSAGAAGGMVSPRDFVNVRRIERRRDRYLSSGIATAHSAKPLTHKYVRGENGPGGFVVLKSASNPCVCTFVWILNTDLKGRLPRYLIHQSLAATMFEFAFHLRQRISELGARA</sequence>
<protein>
    <recommendedName>
        <fullName evidence="1">StAR-related lipid transfer protein 3</fullName>
    </recommendedName>
    <alternativeName>
        <fullName evidence="1">Metastatic lymph node gene 64 protein</fullName>
        <shortName evidence="1">MLN 64</shortName>
    </alternativeName>
    <alternativeName>
        <fullName evidence="1">START domain-containing protein 3</fullName>
        <shortName evidence="1">StARD3</shortName>
    </alternativeName>
</protein>
<organism>
    <name type="scientific">Macaca mulatta</name>
    <name type="common">Rhesus macaque</name>
    <dbReference type="NCBI Taxonomy" id="9544"/>
    <lineage>
        <taxon>Eukaryota</taxon>
        <taxon>Metazoa</taxon>
        <taxon>Chordata</taxon>
        <taxon>Craniata</taxon>
        <taxon>Vertebrata</taxon>
        <taxon>Euteleostomi</taxon>
        <taxon>Mammalia</taxon>
        <taxon>Eutheria</taxon>
        <taxon>Euarchontoglires</taxon>
        <taxon>Primates</taxon>
        <taxon>Haplorrhini</taxon>
        <taxon>Catarrhini</taxon>
        <taxon>Cercopithecidae</taxon>
        <taxon>Cercopithecinae</taxon>
        <taxon>Macaca</taxon>
    </lineage>
</organism>
<reference key="1">
    <citation type="journal article" date="2014" name="Biol. Direct">
        <title>A new rhesus macaque assembly and annotation for next-generation sequencing analyses.</title>
        <authorList>
            <person name="Zimin A.V."/>
            <person name="Cornish A.S."/>
            <person name="Maudhoo M.D."/>
            <person name="Gibbs R.M."/>
            <person name="Zhang X."/>
            <person name="Pandey S."/>
            <person name="Meehan D.T."/>
            <person name="Wipfler K."/>
            <person name="Bosinger S.E."/>
            <person name="Johnson Z.P."/>
            <person name="Tharp G.K."/>
            <person name="Marcais G."/>
            <person name="Roberts M."/>
            <person name="Ferguson B."/>
            <person name="Fox H.S."/>
            <person name="Treangen T."/>
            <person name="Salzberg S.L."/>
            <person name="Yorke J.A."/>
            <person name="Norgren R.B. Jr."/>
        </authorList>
    </citation>
    <scope>NUCLEOTIDE SEQUENCE [MRNA]</scope>
    <source>
        <tissue>Caudate nucleus</tissue>
        <tissue>Testis</tissue>
        <tissue>Thymus</tissue>
    </source>
</reference>
<reference key="2">
    <citation type="journal article" date="2007" name="Science">
        <title>Evolutionary and biomedical insights from the rhesus macaque genome.</title>
        <authorList>
            <person name="Gibbs R.A."/>
            <person name="Rogers J."/>
            <person name="Katze M.G."/>
            <person name="Bumgarner R."/>
            <person name="Weinstock G.M."/>
            <person name="Mardis E.R."/>
            <person name="Remington K.A."/>
            <person name="Strausberg R.L."/>
            <person name="Venter J.C."/>
            <person name="Wilson R.K."/>
            <person name="Batzer M.A."/>
            <person name="Bustamante C.D."/>
            <person name="Eichler E.E."/>
            <person name="Hahn M.W."/>
            <person name="Hardison R.C."/>
            <person name="Makova K.D."/>
            <person name="Miller W."/>
            <person name="Milosavljevic A."/>
            <person name="Palermo R.E."/>
            <person name="Siepel A."/>
            <person name="Sikela J.M."/>
            <person name="Attaway T."/>
            <person name="Bell S."/>
            <person name="Bernard K.E."/>
            <person name="Buhay C.J."/>
            <person name="Chandrabose M.N."/>
            <person name="Dao M."/>
            <person name="Davis C."/>
            <person name="Delehaunty K.D."/>
            <person name="Ding Y."/>
            <person name="Dinh H.H."/>
            <person name="Dugan-Rocha S."/>
            <person name="Fulton L.A."/>
            <person name="Gabisi R.A."/>
            <person name="Garner T.T."/>
            <person name="Godfrey J."/>
            <person name="Hawes A.C."/>
            <person name="Hernandez J."/>
            <person name="Hines S."/>
            <person name="Holder M."/>
            <person name="Hume J."/>
            <person name="Jhangiani S.N."/>
            <person name="Joshi V."/>
            <person name="Khan Z.M."/>
            <person name="Kirkness E.F."/>
            <person name="Cree A."/>
            <person name="Fowler R.G."/>
            <person name="Lee S."/>
            <person name="Lewis L.R."/>
            <person name="Li Z."/>
            <person name="Liu Y.-S."/>
            <person name="Moore S.M."/>
            <person name="Muzny D."/>
            <person name="Nazareth L.V."/>
            <person name="Ngo D.N."/>
            <person name="Okwuonu G.O."/>
            <person name="Pai G."/>
            <person name="Parker D."/>
            <person name="Paul H.A."/>
            <person name="Pfannkoch C."/>
            <person name="Pohl C.S."/>
            <person name="Rogers Y.-H.C."/>
            <person name="Ruiz S.J."/>
            <person name="Sabo A."/>
            <person name="Santibanez J."/>
            <person name="Schneider B.W."/>
            <person name="Smith S.M."/>
            <person name="Sodergren E."/>
            <person name="Svatek A.F."/>
            <person name="Utterback T.R."/>
            <person name="Vattathil S."/>
            <person name="Warren W."/>
            <person name="White C.S."/>
            <person name="Chinwalla A.T."/>
            <person name="Feng Y."/>
            <person name="Halpern A.L."/>
            <person name="Hillier L.W."/>
            <person name="Huang X."/>
            <person name="Minx P."/>
            <person name="Nelson J.O."/>
            <person name="Pepin K.H."/>
            <person name="Qin X."/>
            <person name="Sutton G.G."/>
            <person name="Venter E."/>
            <person name="Walenz B.P."/>
            <person name="Wallis J.W."/>
            <person name="Worley K.C."/>
            <person name="Yang S.-P."/>
            <person name="Jones S.M."/>
            <person name="Marra M.A."/>
            <person name="Rocchi M."/>
            <person name="Schein J.E."/>
            <person name="Baertsch R."/>
            <person name="Clarke L."/>
            <person name="Csuros M."/>
            <person name="Glasscock J."/>
            <person name="Harris R.A."/>
            <person name="Havlak P."/>
            <person name="Jackson A.R."/>
            <person name="Jiang H."/>
            <person name="Liu Y."/>
            <person name="Messina D.N."/>
            <person name="Shen Y."/>
            <person name="Song H.X.-Z."/>
            <person name="Wylie T."/>
            <person name="Zhang L."/>
            <person name="Birney E."/>
            <person name="Han K."/>
            <person name="Konkel M.K."/>
            <person name="Lee J."/>
            <person name="Smit A.F.A."/>
            <person name="Ullmer B."/>
            <person name="Wang H."/>
            <person name="Xing J."/>
            <person name="Burhans R."/>
            <person name="Cheng Z."/>
            <person name="Karro J.E."/>
            <person name="Ma J."/>
            <person name="Raney B."/>
            <person name="She X."/>
            <person name="Cox M.J."/>
            <person name="Demuth J.P."/>
            <person name="Dumas L.J."/>
            <person name="Han S.-G."/>
            <person name="Hopkins J."/>
            <person name="Karimpour-Fard A."/>
            <person name="Kim Y.H."/>
            <person name="Pollack J.R."/>
            <person name="Vinar T."/>
            <person name="Addo-Quaye C."/>
            <person name="Degenhardt J."/>
            <person name="Denby A."/>
            <person name="Hubisz M.J."/>
            <person name="Indap A."/>
            <person name="Kosiol C."/>
            <person name="Lahn B.T."/>
            <person name="Lawson H.A."/>
            <person name="Marklein A."/>
            <person name="Nielsen R."/>
            <person name="Vallender E.J."/>
            <person name="Clark A.G."/>
            <person name="Ferguson B."/>
            <person name="Hernandez R.D."/>
            <person name="Hirani K."/>
            <person name="Kehrer-Sawatzki H."/>
            <person name="Kolb J."/>
            <person name="Patil S."/>
            <person name="Pu L.-L."/>
            <person name="Ren Y."/>
            <person name="Smith D.G."/>
            <person name="Wheeler D.A."/>
            <person name="Schenck I."/>
            <person name="Ball E.V."/>
            <person name="Chen R."/>
            <person name="Cooper D.N."/>
            <person name="Giardine B."/>
            <person name="Hsu F."/>
            <person name="Kent W.J."/>
            <person name="Lesk A."/>
            <person name="Nelson D.L."/>
            <person name="O'brien W.E."/>
            <person name="Pruefer K."/>
            <person name="Stenson P.D."/>
            <person name="Wallace J.C."/>
            <person name="Ke H."/>
            <person name="Liu X.-M."/>
            <person name="Wang P."/>
            <person name="Xiang A.P."/>
            <person name="Yang F."/>
            <person name="Barber G.P."/>
            <person name="Haussler D."/>
            <person name="Karolchik D."/>
            <person name="Kern A.D."/>
            <person name="Kuhn R.M."/>
            <person name="Smith K.E."/>
            <person name="Zwieg A.S."/>
        </authorList>
    </citation>
    <scope>NUCLEOTIDE SEQUENCE [LARGE SCALE GENOMIC DNA]</scope>
    <source>
        <strain>17573</strain>
    </source>
</reference>
<reference key="3">
    <citation type="journal article" date="2011" name="Nat. Biotechnol.">
        <title>Genome sequencing and comparison of two nonhuman primate animal models, the cynomolgus and Chinese rhesus macaques.</title>
        <authorList>
            <person name="Yan G."/>
            <person name="Zhang G."/>
            <person name="Fang X."/>
            <person name="Zhang Y."/>
            <person name="Li C."/>
            <person name="Ling F."/>
            <person name="Cooper D.N."/>
            <person name="Li Q."/>
            <person name="Li Y."/>
            <person name="van Gool A.J."/>
            <person name="Du H."/>
            <person name="Chen J."/>
            <person name="Chen R."/>
            <person name="Zhang P."/>
            <person name="Huang Z."/>
            <person name="Thompson J.R."/>
            <person name="Meng Y."/>
            <person name="Bai Y."/>
            <person name="Wang J."/>
            <person name="Zhuo M."/>
            <person name="Wang T."/>
            <person name="Huang Y."/>
            <person name="Wei L."/>
            <person name="Li J."/>
            <person name="Wang Z."/>
            <person name="Hu H."/>
            <person name="Yang P."/>
            <person name="Le L."/>
            <person name="Stenson P.D."/>
            <person name="Li B."/>
            <person name="Liu X."/>
            <person name="Ball E.V."/>
            <person name="An N."/>
            <person name="Huang Q."/>
            <person name="Zhang Y."/>
            <person name="Fan W."/>
            <person name="Zhang X."/>
            <person name="Li Y."/>
            <person name="Wang W."/>
            <person name="Katze M.G."/>
            <person name="Su B."/>
            <person name="Nielsen R."/>
            <person name="Yang H."/>
            <person name="Wang J."/>
            <person name="Wang X."/>
            <person name="Wang J."/>
        </authorList>
    </citation>
    <scope>NUCLEOTIDE SEQUENCE [LARGE SCALE GENOMIC DNA]</scope>
</reference>
<reference key="4">
    <citation type="journal article" date="2011" name="Biochemistry">
        <title>Identification of StARD3 as a lutein-binding protein in the macula of the primate retina.</title>
        <authorList>
            <person name="Li B."/>
            <person name="Vachali P."/>
            <person name="Frederick J.M."/>
            <person name="Bernstein P.S."/>
        </authorList>
    </citation>
    <scope>FUNCTION</scope>
    <scope>TISSUE SPECIFICITY</scope>
</reference>
<comment type="function">
    <text evidence="1 6">Sterol-binding protein that mediates cholesterol transport from the endoplasmic reticulum to endosomes. The sterol transport mechanism is triggered by phosphorylation of FFAT motif that leads to membrane tethering between the endoplasmic reticulum and late endosomes via interaction with VAPA and VAPB. Acts as a lipid transfer protein that redirects sterol to the endosome at the expense of the cell membrane and favors membrane formation inside endosomes. May also mediate cholesterol transport between other membranes, such as mitochondria membrane or cell membrane. However, such results need additional experimental evidences; probably mainly mediates cholesterol transport from the endoplasmic reticulum to endosomes. Does not activate transcriptional cholesterol sensing. Able to bind other lipids, such as lutein, a xanthophyll carotenoids that form the macular pigment of the retina (By similarity). Able to bind other lipids, such as lutein, a xanthophyll carotenoids that form the macular pigment of the retina (PubMed:21322544).</text>
</comment>
<comment type="catalytic activity">
    <reaction evidence="1">
        <text>cholesterol(in) = cholesterol(out)</text>
        <dbReference type="Rhea" id="RHEA:39747"/>
        <dbReference type="ChEBI" id="CHEBI:16113"/>
    </reaction>
</comment>
<comment type="subunit">
    <text evidence="1">Homodimer. Interacts (via the MENTAL domain) with STARD3NL. Interacts (via phosphorylated FFAT motif) with VAPA (via MSP domain). Interacts (via phosphorylated FFAT motif) with VAPB (via MSP domain). Interacts (via phosphorylated FFAT motif) with MOSPD2 (via MSP domain); this interaction allows enrichment of MOSPD2 around endosomes.</text>
</comment>
<comment type="subcellular location">
    <subcellularLocation>
        <location evidence="1">Late endosome membrane</location>
        <topology evidence="3">Multi-pass membrane protein</topology>
    </subcellularLocation>
    <text evidence="1">Localizes to contact sites between the endoplasmic reticulum and late endosomes: associates with the endoplasmic reticulum membrane via interaction with VAPA, VAPB or MOSPD2.</text>
</comment>
<comment type="tissue specificity">
    <text evidence="6">Present in retina. Localizes to all neurons of macular retina and especially cone inner segments and axons (at protein level).</text>
</comment>
<comment type="domain">
    <text evidence="1">The FFAT motif mediates interaction with VAPA, VAPB and MOSPD2.</text>
</comment>
<comment type="domain">
    <text evidence="1">The START domain mediates lipid-transfer between membranes. It contains a hydrophobic cavity able to accommodate one lipid molecule, thereby serving as a 'hydrophobic bridge' across the aqueous gap between donor and acceptor organelle membranes.</text>
</comment>
<comment type="domain">
    <text evidence="1">The MENTAL domain anchors the protein in endosome membranes and exposes the START domain in the cytosol. It binds cholesterol and mediates homotypic as well as heterotypic interactions between STARD3 and STARD3NL.</text>
</comment>
<comment type="PTM">
    <text evidence="1">Phosphorylation at Ser-209 is necessary and sufficient for the direct interaction of the phosphorylated FFAT motif with the MSP domain of MOSPD2, VAPA and VAPB and allows the tethering of two membranes that participates in the formation of ER-endosome contacts. Phosphorylation of the FFAT motif leads to conformation changes. Additional phosphorylations around the core FFAT motif (QFYSPPE) are not essential but strengthen the interaction with MOSPD2, VAPA and VAPB. Phosphorylation at Ser-209 of FFAT motif drives membrane tethering between the endoplasmic reticulum and late endosomes via interaction with VAPA and VAPB that in turn allows the efficient transport of sterol mediated by the START domain.</text>
</comment>
<comment type="similarity">
    <text evidence="7">Belongs to the STARD3 family.</text>
</comment>
<keyword id="KW-0967">Endosome</keyword>
<keyword id="KW-0445">Lipid transport</keyword>
<keyword id="KW-0446">Lipid-binding</keyword>
<keyword id="KW-0472">Membrane</keyword>
<keyword id="KW-0597">Phosphoprotein</keyword>
<keyword id="KW-1185">Reference proteome</keyword>
<keyword id="KW-0812">Transmembrane</keyword>
<keyword id="KW-1133">Transmembrane helix</keyword>
<keyword id="KW-0813">Transport</keyword>
<proteinExistence type="evidence at protein level"/>
<accession>F7B909</accession>
<accession>G7NI18</accession>